<protein>
    <recommendedName>
        <fullName evidence="1">UPF0473 protein CLM_2868</fullName>
    </recommendedName>
</protein>
<gene>
    <name type="ordered locus">CLM_2868</name>
</gene>
<reference key="1">
    <citation type="submission" date="2008-10" db="EMBL/GenBank/DDBJ databases">
        <title>Genome sequence of Clostridium botulinum A2 Kyoto.</title>
        <authorList>
            <person name="Shrivastava S."/>
            <person name="Brinkac L.M."/>
            <person name="Brown J.L."/>
            <person name="Bruce D."/>
            <person name="Detter C.C."/>
            <person name="Johnson E.A."/>
            <person name="Munk C.A."/>
            <person name="Smith L.A."/>
            <person name="Smith T.J."/>
            <person name="Sutton G."/>
            <person name="Brettin T.S."/>
        </authorList>
    </citation>
    <scope>NUCLEOTIDE SEQUENCE [LARGE SCALE GENOMIC DNA]</scope>
    <source>
        <strain>Kyoto / Type A2</strain>
    </source>
</reference>
<dbReference type="EMBL" id="CP001581">
    <property type="protein sequence ID" value="ACO84896.1"/>
    <property type="molecule type" value="Genomic_DNA"/>
</dbReference>
<dbReference type="RefSeq" id="WP_004452069.1">
    <property type="nucleotide sequence ID" value="NC_012563.1"/>
</dbReference>
<dbReference type="SMR" id="C1FTB7"/>
<dbReference type="KEGG" id="cby:CLM_2868"/>
<dbReference type="eggNOG" id="COG3906">
    <property type="taxonomic scope" value="Bacteria"/>
</dbReference>
<dbReference type="HOGENOM" id="CLU_146610_8_0_9"/>
<dbReference type="Proteomes" id="UP000001374">
    <property type="component" value="Chromosome"/>
</dbReference>
<dbReference type="HAMAP" id="MF_01448">
    <property type="entry name" value="UPF0473"/>
    <property type="match status" value="1"/>
</dbReference>
<dbReference type="InterPro" id="IPR009711">
    <property type="entry name" value="UPF0473"/>
</dbReference>
<dbReference type="PANTHER" id="PTHR40066">
    <property type="entry name" value="UPF0473 PROTEIN CBO2561/CLC_2432"/>
    <property type="match status" value="1"/>
</dbReference>
<dbReference type="PANTHER" id="PTHR40066:SF1">
    <property type="entry name" value="UPF0473 PROTEIN CBO2561_CLC_2432"/>
    <property type="match status" value="1"/>
</dbReference>
<dbReference type="Pfam" id="PF06949">
    <property type="entry name" value="DUF1292"/>
    <property type="match status" value="1"/>
</dbReference>
<evidence type="ECO:0000255" key="1">
    <source>
        <dbReference type="HAMAP-Rule" id="MF_01448"/>
    </source>
</evidence>
<comment type="similarity">
    <text evidence="1">Belongs to the UPF0473 family.</text>
</comment>
<name>Y2868_CLOBJ</name>
<accession>C1FTB7</accession>
<organism>
    <name type="scientific">Clostridium botulinum (strain Kyoto / Type A2)</name>
    <dbReference type="NCBI Taxonomy" id="536232"/>
    <lineage>
        <taxon>Bacteria</taxon>
        <taxon>Bacillati</taxon>
        <taxon>Bacillota</taxon>
        <taxon>Clostridia</taxon>
        <taxon>Eubacteriales</taxon>
        <taxon>Clostridiaceae</taxon>
        <taxon>Clostridium</taxon>
    </lineage>
</organism>
<proteinExistence type="inferred from homology"/>
<feature type="chain" id="PRO_1000184995" description="UPF0473 protein CLM_2868">
    <location>
        <begin position="1"/>
        <end position="84"/>
    </location>
</feature>
<sequence length="84" mass="9655">MDNNVDTITLTDEEGKETEFEVITKLDIEDKEYVVVVPKNEEVDEAIALRIDNNDDGEEVLVPVEEDEEFNMVAEAYELLFSEE</sequence>